<feature type="chain" id="PRO_1000198016" description="Queuine tRNA-ribosyltransferase">
    <location>
        <begin position="1"/>
        <end position="379"/>
    </location>
</feature>
<feature type="region of interest" description="RNA binding" evidence="1">
    <location>
        <begin position="249"/>
        <end position="255"/>
    </location>
</feature>
<feature type="region of interest" description="RNA binding; important for wobble base 34 recognition" evidence="1">
    <location>
        <begin position="273"/>
        <end position="277"/>
    </location>
</feature>
<feature type="active site" description="Proton acceptor" evidence="1">
    <location>
        <position position="94"/>
    </location>
</feature>
<feature type="active site" description="Nucleophile" evidence="1">
    <location>
        <position position="268"/>
    </location>
</feature>
<feature type="binding site" evidence="1">
    <location>
        <begin position="94"/>
        <end position="98"/>
    </location>
    <ligand>
        <name>substrate</name>
    </ligand>
</feature>
<feature type="binding site" evidence="1">
    <location>
        <position position="148"/>
    </location>
    <ligand>
        <name>substrate</name>
    </ligand>
</feature>
<feature type="binding site" evidence="1">
    <location>
        <position position="191"/>
    </location>
    <ligand>
        <name>substrate</name>
    </ligand>
</feature>
<feature type="binding site" evidence="1">
    <location>
        <position position="218"/>
    </location>
    <ligand>
        <name>substrate</name>
    </ligand>
</feature>
<feature type="binding site" evidence="1">
    <location>
        <position position="306"/>
    </location>
    <ligand>
        <name>Zn(2+)</name>
        <dbReference type="ChEBI" id="CHEBI:29105"/>
    </ligand>
</feature>
<feature type="binding site" evidence="1">
    <location>
        <position position="308"/>
    </location>
    <ligand>
        <name>Zn(2+)</name>
        <dbReference type="ChEBI" id="CHEBI:29105"/>
    </ligand>
</feature>
<feature type="binding site" evidence="1">
    <location>
        <position position="311"/>
    </location>
    <ligand>
        <name>Zn(2+)</name>
        <dbReference type="ChEBI" id="CHEBI:29105"/>
    </ligand>
</feature>
<feature type="binding site" evidence="1">
    <location>
        <position position="337"/>
    </location>
    <ligand>
        <name>Zn(2+)</name>
        <dbReference type="ChEBI" id="CHEBI:29105"/>
    </ligand>
</feature>
<comment type="function">
    <text evidence="1">Catalyzes the base-exchange of a guanine (G) residue with the queuine precursor 7-aminomethyl-7-deazaguanine (PreQ1) at position 34 (anticodon wobble position) in tRNAs with GU(N) anticodons (tRNA-Asp, -Asn, -His and -Tyr). Catalysis occurs through a double-displacement mechanism. The nucleophile active site attacks the C1' of nucleotide 34 to detach the guanine base from the RNA, forming a covalent enzyme-RNA intermediate. The proton acceptor active site deprotonates the incoming PreQ1, allowing a nucleophilic attack on the C1' of the ribose to form the product. After dissociation, two additional enzymatic reactions on the tRNA convert PreQ1 to queuine (Q), resulting in the hypermodified nucleoside queuosine (7-(((4,5-cis-dihydroxy-2-cyclopenten-1-yl)amino)methyl)-7-deazaguanosine).</text>
</comment>
<comment type="catalytic activity">
    <reaction evidence="1">
        <text>7-aminomethyl-7-carbaguanine + guanosine(34) in tRNA = 7-aminomethyl-7-carbaguanosine(34) in tRNA + guanine</text>
        <dbReference type="Rhea" id="RHEA:24104"/>
        <dbReference type="Rhea" id="RHEA-COMP:10341"/>
        <dbReference type="Rhea" id="RHEA-COMP:10342"/>
        <dbReference type="ChEBI" id="CHEBI:16235"/>
        <dbReference type="ChEBI" id="CHEBI:58703"/>
        <dbReference type="ChEBI" id="CHEBI:74269"/>
        <dbReference type="ChEBI" id="CHEBI:82833"/>
        <dbReference type="EC" id="2.4.2.29"/>
    </reaction>
</comment>
<comment type="cofactor">
    <cofactor evidence="1">
        <name>Zn(2+)</name>
        <dbReference type="ChEBI" id="CHEBI:29105"/>
    </cofactor>
    <text evidence="1">Binds 1 zinc ion per subunit.</text>
</comment>
<comment type="pathway">
    <text evidence="1">tRNA modification; tRNA-queuosine biosynthesis.</text>
</comment>
<comment type="subunit">
    <text evidence="1">Homodimer. Within each dimer, one monomer is responsible for RNA recognition and catalysis, while the other monomer binds to the replacement base PreQ1.</text>
</comment>
<comment type="similarity">
    <text evidence="1">Belongs to the queuine tRNA-ribosyltransferase family.</text>
</comment>
<accession>B9E716</accession>
<gene>
    <name evidence="1" type="primary">tgt</name>
    <name type="ordered locus">MCCL_1277</name>
</gene>
<name>TGT_MACCJ</name>
<protein>
    <recommendedName>
        <fullName evidence="1">Queuine tRNA-ribosyltransferase</fullName>
        <ecNumber evidence="1">2.4.2.29</ecNumber>
    </recommendedName>
    <alternativeName>
        <fullName evidence="1">Guanine insertion enzyme</fullName>
    </alternativeName>
    <alternativeName>
        <fullName evidence="1">tRNA-guanine transglycosylase</fullName>
    </alternativeName>
</protein>
<reference key="1">
    <citation type="journal article" date="2009" name="J. Bacteriol.">
        <title>Complete genome sequence of Macrococcus caseolyticus strain JCSCS5402, reflecting the ancestral genome of the human-pathogenic staphylococci.</title>
        <authorList>
            <person name="Baba T."/>
            <person name="Kuwahara-Arai K."/>
            <person name="Uchiyama I."/>
            <person name="Takeuchi F."/>
            <person name="Ito T."/>
            <person name="Hiramatsu K."/>
        </authorList>
    </citation>
    <scope>NUCLEOTIDE SEQUENCE [LARGE SCALE GENOMIC DNA]</scope>
    <source>
        <strain>JCSC5402</strain>
    </source>
</reference>
<dbReference type="EC" id="2.4.2.29" evidence="1"/>
<dbReference type="EMBL" id="AP009484">
    <property type="protein sequence ID" value="BAH17984.1"/>
    <property type="molecule type" value="Genomic_DNA"/>
</dbReference>
<dbReference type="RefSeq" id="WP_012657182.1">
    <property type="nucleotide sequence ID" value="NC_011999.1"/>
</dbReference>
<dbReference type="SMR" id="B9E716"/>
<dbReference type="STRING" id="458233.MCCL_1277"/>
<dbReference type="KEGG" id="mcl:MCCL_1277"/>
<dbReference type="eggNOG" id="COG0343">
    <property type="taxonomic scope" value="Bacteria"/>
</dbReference>
<dbReference type="HOGENOM" id="CLU_022060_0_1_9"/>
<dbReference type="OrthoDB" id="9805417at2"/>
<dbReference type="UniPathway" id="UPA00392"/>
<dbReference type="Proteomes" id="UP000001383">
    <property type="component" value="Chromosome"/>
</dbReference>
<dbReference type="GO" id="GO:0005829">
    <property type="term" value="C:cytosol"/>
    <property type="evidence" value="ECO:0007669"/>
    <property type="project" value="TreeGrafter"/>
</dbReference>
<dbReference type="GO" id="GO:0046872">
    <property type="term" value="F:metal ion binding"/>
    <property type="evidence" value="ECO:0007669"/>
    <property type="project" value="UniProtKB-KW"/>
</dbReference>
<dbReference type="GO" id="GO:0008479">
    <property type="term" value="F:tRNA-guanosine(34) queuine transglycosylase activity"/>
    <property type="evidence" value="ECO:0007669"/>
    <property type="project" value="UniProtKB-UniRule"/>
</dbReference>
<dbReference type="GO" id="GO:0008616">
    <property type="term" value="P:queuosine biosynthetic process"/>
    <property type="evidence" value="ECO:0007669"/>
    <property type="project" value="UniProtKB-UniRule"/>
</dbReference>
<dbReference type="GO" id="GO:0002099">
    <property type="term" value="P:tRNA wobble guanine modification"/>
    <property type="evidence" value="ECO:0007669"/>
    <property type="project" value="TreeGrafter"/>
</dbReference>
<dbReference type="GO" id="GO:0101030">
    <property type="term" value="P:tRNA-guanine transglycosylation"/>
    <property type="evidence" value="ECO:0007669"/>
    <property type="project" value="InterPro"/>
</dbReference>
<dbReference type="FunFam" id="3.20.20.105:FF:000001">
    <property type="entry name" value="Queuine tRNA-ribosyltransferase"/>
    <property type="match status" value="1"/>
</dbReference>
<dbReference type="Gene3D" id="3.20.20.105">
    <property type="entry name" value="Queuine tRNA-ribosyltransferase-like"/>
    <property type="match status" value="1"/>
</dbReference>
<dbReference type="HAMAP" id="MF_00168">
    <property type="entry name" value="Q_tRNA_Tgt"/>
    <property type="match status" value="1"/>
</dbReference>
<dbReference type="InterPro" id="IPR050076">
    <property type="entry name" value="ArchSynthase1/Queuine_TRR"/>
</dbReference>
<dbReference type="InterPro" id="IPR004803">
    <property type="entry name" value="TGT"/>
</dbReference>
<dbReference type="InterPro" id="IPR036511">
    <property type="entry name" value="TGT-like_sf"/>
</dbReference>
<dbReference type="InterPro" id="IPR002616">
    <property type="entry name" value="tRNA_ribo_trans-like"/>
</dbReference>
<dbReference type="NCBIfam" id="TIGR00430">
    <property type="entry name" value="Q_tRNA_tgt"/>
    <property type="match status" value="1"/>
</dbReference>
<dbReference type="NCBIfam" id="TIGR00449">
    <property type="entry name" value="tgt_general"/>
    <property type="match status" value="1"/>
</dbReference>
<dbReference type="PANTHER" id="PTHR46499">
    <property type="entry name" value="QUEUINE TRNA-RIBOSYLTRANSFERASE"/>
    <property type="match status" value="1"/>
</dbReference>
<dbReference type="PANTHER" id="PTHR46499:SF1">
    <property type="entry name" value="QUEUINE TRNA-RIBOSYLTRANSFERASE"/>
    <property type="match status" value="1"/>
</dbReference>
<dbReference type="Pfam" id="PF01702">
    <property type="entry name" value="TGT"/>
    <property type="match status" value="1"/>
</dbReference>
<dbReference type="SUPFAM" id="SSF51713">
    <property type="entry name" value="tRNA-guanine transglycosylase"/>
    <property type="match status" value="1"/>
</dbReference>
<sequence length="379" mass="43194">MNAVTYEHIKTCKQSGARLGIVHTPHGSFETPMFMPVGTQATVKTMSPEELKAMNAKIILSNTYHLWLRPGNDVIREAGGLHKFMNWDGPILTDSGGFQVFSLSDMRKIEEEGVHFRHHLNGSKLFLSPHKAMHIQNDLGSDIMMAFDECPPMPATYEYVKASIERTSRWAERCLEAHQRPEDQALFGIIQGGEYEDLRTQSAKDLVSMDFPGYAIGGLSVGEPKPIMYRMLEHTTPLMPFNKPRYLMGVGSPDALIEGAIRGIDMFDCVLPTRIARNGTCMTSKGRVVVKNAKYERDFTPLDEKCECYTCKNYTKAYLRHLIKADETFGIRLTTIHNLHFLLNLMEQVREAIRNDRLLDFKEEFFEEYGLNVENPKNF</sequence>
<organism>
    <name type="scientific">Macrococcus caseolyticus (strain JCSC5402)</name>
    <name type="common">Macrococcoides caseolyticum</name>
    <dbReference type="NCBI Taxonomy" id="458233"/>
    <lineage>
        <taxon>Bacteria</taxon>
        <taxon>Bacillati</taxon>
        <taxon>Bacillota</taxon>
        <taxon>Bacilli</taxon>
        <taxon>Bacillales</taxon>
        <taxon>Staphylococcaceae</taxon>
        <taxon>Macrococcoides</taxon>
    </lineage>
</organism>
<proteinExistence type="inferred from homology"/>
<keyword id="KW-0328">Glycosyltransferase</keyword>
<keyword id="KW-0479">Metal-binding</keyword>
<keyword id="KW-0671">Queuosine biosynthesis</keyword>
<keyword id="KW-1185">Reference proteome</keyword>
<keyword id="KW-0808">Transferase</keyword>
<keyword id="KW-0819">tRNA processing</keyword>
<keyword id="KW-0862">Zinc</keyword>
<evidence type="ECO:0000255" key="1">
    <source>
        <dbReference type="HAMAP-Rule" id="MF_00168"/>
    </source>
</evidence>